<dbReference type="SMR" id="P08814"/>
<dbReference type="FunCoup" id="P08814">
    <property type="interactions" value="25"/>
</dbReference>
<dbReference type="STRING" id="9913.ENSBTAP00000067410"/>
<dbReference type="PaxDb" id="9913-ENSBTAP00000024555"/>
<dbReference type="PeptideAtlas" id="P08814"/>
<dbReference type="eggNOG" id="ENOG502SSXW">
    <property type="taxonomic scope" value="Eukaryota"/>
</dbReference>
<dbReference type="InParanoid" id="P08814"/>
<dbReference type="Proteomes" id="UP000009136">
    <property type="component" value="Unplaced"/>
</dbReference>
<dbReference type="GO" id="GO:0005634">
    <property type="term" value="C:nucleus"/>
    <property type="evidence" value="ECO:0000318"/>
    <property type="project" value="GO_Central"/>
</dbReference>
<dbReference type="GO" id="GO:0042393">
    <property type="term" value="F:histone binding"/>
    <property type="evidence" value="ECO:0000318"/>
    <property type="project" value="GO_Central"/>
</dbReference>
<dbReference type="GO" id="GO:0002376">
    <property type="term" value="P:immune system process"/>
    <property type="evidence" value="ECO:0007669"/>
    <property type="project" value="UniProtKB-KW"/>
</dbReference>
<dbReference type="GO" id="GO:0043066">
    <property type="term" value="P:negative regulation of apoptotic process"/>
    <property type="evidence" value="ECO:0000318"/>
    <property type="project" value="GO_Central"/>
</dbReference>
<dbReference type="GO" id="GO:0045944">
    <property type="term" value="P:positive regulation of transcription by RNA polymerase II"/>
    <property type="evidence" value="ECO:0000318"/>
    <property type="project" value="GO_Central"/>
</dbReference>
<dbReference type="InterPro" id="IPR004931">
    <property type="entry name" value="Pro/parathymosin"/>
</dbReference>
<dbReference type="PANTHER" id="PTHR22745:SF3">
    <property type="entry name" value="PARATHYMOSIN"/>
    <property type="match status" value="1"/>
</dbReference>
<dbReference type="PANTHER" id="PTHR22745">
    <property type="entry name" value="PROTHYMOSIN ALPHA"/>
    <property type="match status" value="1"/>
</dbReference>
<dbReference type="Pfam" id="PF03247">
    <property type="entry name" value="Prothymosin"/>
    <property type="match status" value="1"/>
</dbReference>
<protein>
    <recommendedName>
        <fullName>Parathymosin</fullName>
    </recommendedName>
</protein>
<feature type="initiator methionine" description="Removed" evidence="2 5">
    <location>
        <position position="1"/>
    </location>
</feature>
<feature type="chain" id="PRO_0000191631" description="Parathymosin">
    <location>
        <begin position="2"/>
        <end position="102"/>
    </location>
</feature>
<feature type="region of interest" description="Disordered" evidence="4">
    <location>
        <begin position="1"/>
        <end position="102"/>
    </location>
</feature>
<feature type="compositionally biased region" description="Basic and acidic residues" evidence="4">
    <location>
        <begin position="13"/>
        <end position="37"/>
    </location>
</feature>
<feature type="compositionally biased region" description="Acidic residues" evidence="4">
    <location>
        <begin position="38"/>
        <end position="76"/>
    </location>
</feature>
<feature type="modified residue" description="N-acetylserine" evidence="2">
    <location>
        <position position="2"/>
    </location>
</feature>
<feature type="modified residue" description="Phosphoserine" evidence="2">
    <location>
        <position position="2"/>
    </location>
</feature>
<feature type="modified residue" description="N6-acetyllysine" evidence="2">
    <location>
        <position position="4"/>
    </location>
</feature>
<feature type="modified residue" description="Phosphoserine" evidence="2">
    <location>
        <position position="5"/>
    </location>
</feature>
<feature type="modified residue" description="Phosphoserine" evidence="3">
    <location>
        <position position="13"/>
    </location>
</feature>
<feature type="modified residue" description="N6-acetyllysine" evidence="2">
    <location>
        <position position="15"/>
    </location>
</feature>
<feature type="modified residue" description="Phosphothreonine" evidence="1">
    <location>
        <position position="52"/>
    </location>
</feature>
<feature type="modified residue" description="N6-acetyllysine" evidence="2">
    <location>
        <position position="92"/>
    </location>
</feature>
<sequence>MSEKSVEAAAELSAKDLKEKKEKVEEKAGRKERKKEVVEEEENGAEEEEEETAEDGEEEDDGDEEDEEEEEEEDEGPALVRAAEEEDEADPKRQKTENGASA</sequence>
<name>PTMS_BOVIN</name>
<keyword id="KW-0007">Acetylation</keyword>
<keyword id="KW-0903">Direct protein sequencing</keyword>
<keyword id="KW-0391">Immunity</keyword>
<keyword id="KW-0597">Phosphoprotein</keyword>
<keyword id="KW-1185">Reference proteome</keyword>
<evidence type="ECO:0000250" key="1">
    <source>
        <dbReference type="UniProtKB" id="P04550"/>
    </source>
</evidence>
<evidence type="ECO:0000250" key="2">
    <source>
        <dbReference type="UniProtKB" id="P20962"/>
    </source>
</evidence>
<evidence type="ECO:0000250" key="3">
    <source>
        <dbReference type="UniProtKB" id="Q9D0J8"/>
    </source>
</evidence>
<evidence type="ECO:0000256" key="4">
    <source>
        <dbReference type="SAM" id="MobiDB-lite"/>
    </source>
</evidence>
<evidence type="ECO:0000269" key="5">
    <source>
    </source>
</evidence>
<evidence type="ECO:0000305" key="6"/>
<organism>
    <name type="scientific">Bos taurus</name>
    <name type="common">Bovine</name>
    <dbReference type="NCBI Taxonomy" id="9913"/>
    <lineage>
        <taxon>Eukaryota</taxon>
        <taxon>Metazoa</taxon>
        <taxon>Chordata</taxon>
        <taxon>Craniata</taxon>
        <taxon>Vertebrata</taxon>
        <taxon>Euteleostomi</taxon>
        <taxon>Mammalia</taxon>
        <taxon>Eutheria</taxon>
        <taxon>Laurasiatheria</taxon>
        <taxon>Artiodactyla</taxon>
        <taxon>Ruminantia</taxon>
        <taxon>Pecora</taxon>
        <taxon>Bovidae</taxon>
        <taxon>Bovinae</taxon>
        <taxon>Bos</taxon>
    </lineage>
</organism>
<accession>P08814</accession>
<gene>
    <name type="primary">PTMS</name>
</gene>
<comment type="function">
    <text>Parathymosin may mediate immune function by blocking the effect of prothymosin alpha which confers resistance to certain opportunistic infections.</text>
</comment>
<comment type="similarity">
    <text evidence="6">Belongs to the pro/parathymosin family.</text>
</comment>
<reference key="1">
    <citation type="journal article" date="1988" name="Biochem. Biophys. Res. Commun.">
        <title>Bovine parathymosin: amino acid sequence and comparison with rat parathymosin.</title>
        <authorList>
            <person name="Panneerselvam C."/>
            <person name="Clinton M."/>
            <person name="Wellner D."/>
            <person name="Horecker B.L."/>
        </authorList>
    </citation>
    <scope>PROTEIN SEQUENCE OF 2-102</scope>
</reference>
<proteinExistence type="evidence at protein level"/>